<organism>
    <name type="scientific">Homo sapiens</name>
    <name type="common">Human</name>
    <dbReference type="NCBI Taxonomy" id="9606"/>
    <lineage>
        <taxon>Eukaryota</taxon>
        <taxon>Metazoa</taxon>
        <taxon>Chordata</taxon>
        <taxon>Craniata</taxon>
        <taxon>Vertebrata</taxon>
        <taxon>Euteleostomi</taxon>
        <taxon>Mammalia</taxon>
        <taxon>Eutheria</taxon>
        <taxon>Euarchontoglires</taxon>
        <taxon>Primates</taxon>
        <taxon>Haplorrhini</taxon>
        <taxon>Catarrhini</taxon>
        <taxon>Hominidae</taxon>
        <taxon>Homo</taxon>
    </lineage>
</organism>
<comment type="function">
    <text>Essential component of the high affinity receptor for the general membrane fusion machinery and an important regulator of transport vesicle docking and fusion.</text>
</comment>
<comment type="subunit">
    <text evidence="1 2 4 5 8">Homotetramer (via coiled-coil domain), also forms heterotetramers with STX4 and VAMP3 (PubMed:12556468). Found in a complex with VAMP8 and STX1A (PubMed:12130530). Found in a complex with VAMP8 and STX4 in pancreas (By similarity). Interacts simultaneously with SNAPIN and SYN4 (By similarity). Interacts with STX1A (By similarity). Interacts with STX12 (By similarity). Interacts tightly to multiple syntaxins and synaptobrevins/VAMPs (By similarity). Interacts with ZDHHC13 (via ANK repeats) (By similarity). Interacts with ZDHHC17 (via ANK repeats) (PubMed:28882895).</text>
</comment>
<comment type="interaction">
    <interactant intactId="EBI-745000">
        <id>O00161</id>
    </interactant>
    <interactant intactId="EBI-749652">
        <id>P54920</id>
        <label>NAPA</label>
    </interactant>
    <organismsDiffer>false</organismsDiffer>
    <experiments>5</experiments>
</comment>
<comment type="interaction">
    <interactant intactId="EBI-745000">
        <id>O00161</id>
    </interactant>
    <interactant intactId="EBI-3921185">
        <id>Q9H115</id>
        <label>NAPB</label>
    </interactant>
    <organismsDiffer>false</organismsDiffer>
    <experiments>3</experiments>
</comment>
<comment type="interaction">
    <interactant intactId="EBI-745000">
        <id>O00161</id>
    </interactant>
    <interactant intactId="EBI-749420">
        <id>O76038</id>
        <label>SCGN</label>
    </interactant>
    <organismsDiffer>false</organismsDiffer>
    <experiments>3</experiments>
</comment>
<comment type="interaction">
    <interactant intactId="EBI-745000">
        <id>O00161</id>
    </interactant>
    <interactant intactId="EBI-714135">
        <id>O75558</id>
        <label>STX11</label>
    </interactant>
    <organismsDiffer>false</organismsDiffer>
    <experiments>11</experiments>
</comment>
<comment type="interaction">
    <interactant intactId="EBI-745000">
        <id>O00161</id>
    </interactant>
    <interactant intactId="EBI-722343">
        <id>Q15836</id>
        <label>VAMP3</label>
    </interactant>
    <organismsDiffer>false</organismsDiffer>
    <experiments>3</experiments>
</comment>
<comment type="interaction">
    <interactant intactId="EBI-745000">
        <id>O00161</id>
    </interactant>
    <interactant intactId="EBI-524753">
        <id>Q8IUH5</id>
        <label>ZDHHC17</label>
    </interactant>
    <organismsDiffer>false</organismsDiffer>
    <experiments>4</experiments>
</comment>
<comment type="subcellular location">
    <subcellularLocation>
        <location>Cell membrane</location>
        <topology>Peripheral membrane protein</topology>
    </subcellularLocation>
    <subcellularLocation>
        <location>Cell membrane</location>
        <topology>Lipid-anchor</topology>
    </subcellularLocation>
    <subcellularLocation>
        <location>Synapse</location>
        <location>Synaptosome</location>
    </subcellularLocation>
    <text>Mainly localized to the plasma membrane.</text>
</comment>
<comment type="alternative products">
    <event type="alternative splicing"/>
    <isoform>
        <id>O00161-1</id>
        <name>SNAP-23a</name>
        <sequence type="displayed"/>
    </isoform>
    <isoform>
        <id>O00161-2</id>
        <name>SNAP-23b</name>
        <sequence type="described" ref="VSP_006187 VSP_006188"/>
    </isoform>
</comment>
<comment type="tissue specificity">
    <text>Ubiquitous. Highest levels where found in placenta.</text>
</comment>
<comment type="similarity">
    <text evidence="11">Belongs to the SNAP-25 family.</text>
</comment>
<protein>
    <recommendedName>
        <fullName>Synaptosomal-associated protein 23</fullName>
        <shortName>SNAP-23</shortName>
    </recommendedName>
    <alternativeName>
        <fullName>Vesicle-membrane fusion protein SNAP-23</fullName>
    </alternativeName>
</protein>
<reference key="1">
    <citation type="journal article" date="1996" name="J. Biol. Chem.">
        <title>Identification of a novel syntaxin- and synaptobrevin/VAMP-binding protein, SNAP-23, expressed in non-neuronal tissues.</title>
        <authorList>
            <person name="Ravichandran V."/>
            <person name="Chawla A."/>
            <person name="Roche P.A."/>
        </authorList>
    </citation>
    <scope>NUCLEOTIDE SEQUENCE [MRNA] (ISOFORM SNAP-23A)</scope>
    <source>
        <tissue>B-cell</tissue>
    </source>
</reference>
<reference key="2">
    <citation type="journal article" date="1997" name="Biochem. Biophys. Res. Commun.">
        <title>Identification of two isoforms of the vesicle-membrane fusion protein SNAP-23 in human neutrophils and HL-60 cells.</title>
        <authorList>
            <person name="Mollinedo F."/>
            <person name="Lazo P.A."/>
        </authorList>
    </citation>
    <scope>NUCLEOTIDE SEQUENCE [MRNA] (ISOFORMS SNAP-23A AND SNAP-23B)</scope>
    <source>
        <tissue>Neutrophil</tissue>
    </source>
</reference>
<reference key="3">
    <citation type="journal article" date="2001" name="Hum. Genet.">
        <title>Genomic organization, chromosomal localization, alternative splicing, and isoforms of human Synaptosome associated protein-23 gene implicated in vesicle-membrane fusion.</title>
        <authorList>
            <person name="Lazo P.A."/>
            <person name="Nadal M."/>
            <person name="Ferrer M."/>
            <person name="Area E."/>
            <person name="Hernandez-Torres J."/>
            <person name="Nabokina S.M."/>
            <person name="Mollinedo F."/>
            <person name="Estivill X."/>
        </authorList>
    </citation>
    <scope>NUCLEOTIDE SEQUENCE [GENOMIC DNA / MRNA]</scope>
    <scope>ALTERNATIVE SPLICING</scope>
</reference>
<reference key="4">
    <citation type="submission" date="2003-05" db="EMBL/GenBank/DDBJ databases">
        <title>Cloning of human full-length CDSs in BD Creator(TM) system donor vector.</title>
        <authorList>
            <person name="Kalnine N."/>
            <person name="Chen X."/>
            <person name="Rolfs A."/>
            <person name="Halleck A."/>
            <person name="Hines L."/>
            <person name="Eisenstein S."/>
            <person name="Koundinya M."/>
            <person name="Raphael J."/>
            <person name="Moreira D."/>
            <person name="Kelley T."/>
            <person name="LaBaer J."/>
            <person name="Lin Y."/>
            <person name="Phelan M."/>
            <person name="Farmer A."/>
        </authorList>
    </citation>
    <scope>NUCLEOTIDE SEQUENCE [LARGE SCALE MRNA] (ISOFORM SNAP-23A)</scope>
</reference>
<reference key="5">
    <citation type="submission" date="2004-06" db="EMBL/GenBank/DDBJ databases">
        <title>Cloning of human full open reading frames in Gateway(TM) system entry vector (pDONR201).</title>
        <authorList>
            <person name="Ebert L."/>
            <person name="Schick M."/>
            <person name="Neubert P."/>
            <person name="Schatten R."/>
            <person name="Henze S."/>
            <person name="Korn B."/>
        </authorList>
    </citation>
    <scope>NUCLEOTIDE SEQUENCE [LARGE SCALE MRNA] (ISOFORM SNAP-23A)</scope>
</reference>
<reference key="6">
    <citation type="journal article" date="2004" name="Genome Res.">
        <title>The status, quality, and expansion of the NIH full-length cDNA project: the Mammalian Gene Collection (MGC).</title>
        <authorList>
            <consortium name="The MGC Project Team"/>
        </authorList>
    </citation>
    <scope>NUCLEOTIDE SEQUENCE [LARGE SCALE MRNA] (ISOFORM SNAP-23A)</scope>
    <source>
        <tissue>Cervix</tissue>
        <tissue>Placenta</tissue>
        <tissue>Testis</tissue>
    </source>
</reference>
<reference key="7">
    <citation type="journal article" date="2003" name="Nat. Biotechnol.">
        <title>Exploring proteomes and analyzing protein processing by mass spectrometric identification of sorted N-terminal peptides.</title>
        <authorList>
            <person name="Gevaert K."/>
            <person name="Goethals M."/>
            <person name="Martens L."/>
            <person name="Van Damme J."/>
            <person name="Staes A."/>
            <person name="Thomas G.R."/>
            <person name="Vandekerckhove J."/>
        </authorList>
    </citation>
    <scope>PROTEIN SEQUENCE OF 1-12</scope>
    <scope>ACETYLATION AT MET-1</scope>
    <source>
        <tissue>Platelet</tissue>
    </source>
</reference>
<reference key="8">
    <citation type="submission" date="2008-12" db="UniProtKB">
        <authorList>
            <person name="Bienvenut W.V."/>
            <person name="Lilla S."/>
            <person name="von Kriegsheim A."/>
            <person name="Lempens A."/>
            <person name="Kolch W."/>
        </authorList>
    </citation>
    <scope>PROTEIN SEQUENCE OF 1-12 AND 55-64</scope>
    <scope>ACETYLATION AT MET-1</scope>
    <scope>IDENTIFICATION BY MASS SPECTROMETRY</scope>
    <source>
        <tissue>Ovarian carcinoma</tissue>
    </source>
</reference>
<reference key="9">
    <citation type="journal article" date="2002" name="Blood">
        <title>Vesicle-associated membrane protein 3 (VAMP-3) and VAMP-8 are present in human platelets and are required for granule secretion.</title>
        <authorList>
            <person name="Polgar J."/>
            <person name="Chung S.H."/>
            <person name="Reed G.L."/>
        </authorList>
    </citation>
    <scope>IDENTIFICATION IN A COMPLEX WITH VAMP8 AND STX1A</scope>
</reference>
<reference key="10">
    <citation type="journal article" date="2008" name="Proc. Natl. Acad. Sci. U.S.A.">
        <title>A quantitative atlas of mitotic phosphorylation.</title>
        <authorList>
            <person name="Dephoure N."/>
            <person name="Zhou C."/>
            <person name="Villen J."/>
            <person name="Beausoleil S.A."/>
            <person name="Bakalarski C.E."/>
            <person name="Elledge S.J."/>
            <person name="Gygi S.P."/>
        </authorList>
    </citation>
    <scope>PHOSPHORYLATION [LARGE SCALE ANALYSIS] AT SER-110</scope>
    <scope>IDENTIFICATION BY MASS SPECTROMETRY [LARGE SCALE ANALYSIS]</scope>
    <source>
        <tissue>Cervix carcinoma</tissue>
    </source>
</reference>
<reference key="11">
    <citation type="journal article" date="2009" name="Anal. Chem.">
        <title>Lys-N and trypsin cover complementary parts of the phosphoproteome in a refined SCX-based approach.</title>
        <authorList>
            <person name="Gauci S."/>
            <person name="Helbig A.O."/>
            <person name="Slijper M."/>
            <person name="Krijgsveld J."/>
            <person name="Heck A.J."/>
            <person name="Mohammed S."/>
        </authorList>
    </citation>
    <scope>ACETYLATION [LARGE SCALE ANALYSIS] AT MET-1</scope>
    <scope>IDENTIFICATION BY MASS SPECTROMETRY [LARGE SCALE ANALYSIS]</scope>
</reference>
<reference key="12">
    <citation type="journal article" date="2010" name="Sci. Signal.">
        <title>Quantitative phosphoproteomics reveals widespread full phosphorylation site occupancy during mitosis.</title>
        <authorList>
            <person name="Olsen J.V."/>
            <person name="Vermeulen M."/>
            <person name="Santamaria A."/>
            <person name="Kumar C."/>
            <person name="Miller M.L."/>
            <person name="Jensen L.J."/>
            <person name="Gnad F."/>
            <person name="Cox J."/>
            <person name="Jensen T.S."/>
            <person name="Nigg E.A."/>
            <person name="Brunak S."/>
            <person name="Mann M."/>
        </authorList>
    </citation>
    <scope>ACETYLATION [LARGE SCALE ANALYSIS] AT MET-1</scope>
    <scope>PHOSPHORYLATION [LARGE SCALE ANALYSIS] AT SER-110</scope>
    <scope>IDENTIFICATION BY MASS SPECTROMETRY [LARGE SCALE ANALYSIS]</scope>
    <source>
        <tissue>Cervix carcinoma</tissue>
    </source>
</reference>
<reference key="13">
    <citation type="journal article" date="2011" name="BMC Syst. Biol.">
        <title>Initial characterization of the human central proteome.</title>
        <authorList>
            <person name="Burkard T.R."/>
            <person name="Planyavsky M."/>
            <person name="Kaupe I."/>
            <person name="Breitwieser F.P."/>
            <person name="Buerckstuemmer T."/>
            <person name="Bennett K.L."/>
            <person name="Superti-Furga G."/>
            <person name="Colinge J."/>
        </authorList>
    </citation>
    <scope>IDENTIFICATION BY MASS SPECTROMETRY [LARGE SCALE ANALYSIS]</scope>
</reference>
<reference key="14">
    <citation type="journal article" date="2011" name="J. Lipid Res.">
        <title>Site-specific analysis of protein S-acylation by resin-assisted capture.</title>
        <authorList>
            <person name="Forrester M.T."/>
            <person name="Hess D.T."/>
            <person name="Thompson J.W."/>
            <person name="Hultman R."/>
            <person name="Moseley M.A."/>
            <person name="Stamler J.S."/>
            <person name="Casey P.J."/>
        </authorList>
    </citation>
    <scope>PALMITOYLATION AT CYS-79; CYS-80; CYS-83; CYS-85; CYS-87 AND CYS-112</scope>
</reference>
<reference key="15">
    <citation type="journal article" date="2011" name="Sci. Signal.">
        <title>System-wide temporal characterization of the proteome and phosphoproteome of human embryonic stem cell differentiation.</title>
        <authorList>
            <person name="Rigbolt K.T."/>
            <person name="Prokhorova T.A."/>
            <person name="Akimov V."/>
            <person name="Henningsen J."/>
            <person name="Johansen P.T."/>
            <person name="Kratchmarova I."/>
            <person name="Kassem M."/>
            <person name="Mann M."/>
            <person name="Olsen J.V."/>
            <person name="Blagoev B."/>
        </authorList>
    </citation>
    <scope>ACETYLATION [LARGE SCALE ANALYSIS] AT MET-1</scope>
    <scope>PHOSPHORYLATION [LARGE SCALE ANALYSIS] AT SER-34 AND SER-110</scope>
    <scope>IDENTIFICATION BY MASS SPECTROMETRY [LARGE SCALE ANALYSIS]</scope>
</reference>
<reference key="16">
    <citation type="journal article" date="2012" name="Mol. Cell. Proteomics">
        <title>Comparative large-scale characterisation of plant vs. mammal proteins reveals similar and idiosyncratic N-alpha acetylation features.</title>
        <authorList>
            <person name="Bienvenut W.V."/>
            <person name="Sumpton D."/>
            <person name="Martinez A."/>
            <person name="Lilla S."/>
            <person name="Espagne C."/>
            <person name="Meinnel T."/>
            <person name="Giglione C."/>
        </authorList>
    </citation>
    <scope>ACETYLATION [LARGE SCALE ANALYSIS] AT MET-1</scope>
    <scope>IDENTIFICATION BY MASS SPECTROMETRY [LARGE SCALE ANALYSIS]</scope>
</reference>
<reference key="17">
    <citation type="journal article" date="2012" name="Proc. Natl. Acad. Sci. U.S.A.">
        <title>N-terminal acetylome analyses and functional insights of the N-terminal acetyltransferase NatB.</title>
        <authorList>
            <person name="Van Damme P."/>
            <person name="Lasa M."/>
            <person name="Polevoda B."/>
            <person name="Gazquez C."/>
            <person name="Elosegui-Artola A."/>
            <person name="Kim D.S."/>
            <person name="De Juan-Pardo E."/>
            <person name="Demeyer K."/>
            <person name="Hole K."/>
            <person name="Larrea E."/>
            <person name="Timmerman E."/>
            <person name="Prieto J."/>
            <person name="Arnesen T."/>
            <person name="Sherman F."/>
            <person name="Gevaert K."/>
            <person name="Aldabe R."/>
        </authorList>
    </citation>
    <scope>ACETYLATION [LARGE SCALE ANALYSIS] AT MET-1</scope>
    <scope>IDENTIFICATION BY MASS SPECTROMETRY [LARGE SCALE ANALYSIS]</scope>
</reference>
<reference key="18">
    <citation type="journal article" date="2013" name="J. Proteome Res.">
        <title>Toward a comprehensive characterization of a human cancer cell phosphoproteome.</title>
        <authorList>
            <person name="Zhou H."/>
            <person name="Di Palma S."/>
            <person name="Preisinger C."/>
            <person name="Peng M."/>
            <person name="Polat A.N."/>
            <person name="Heck A.J."/>
            <person name="Mohammed S."/>
        </authorList>
    </citation>
    <scope>PHOSPHORYLATION [LARGE SCALE ANALYSIS] AT SER-5; SER-6; SER-20; SER-34 AND SER-110</scope>
    <scope>IDENTIFICATION BY MASS SPECTROMETRY [LARGE SCALE ANALYSIS]</scope>
    <source>
        <tissue>Cervix carcinoma</tissue>
        <tissue>Erythroleukemia</tissue>
    </source>
</reference>
<reference key="19">
    <citation type="journal article" date="2014" name="J. Proteomics">
        <title>An enzyme assisted RP-RPLC approach for in-depth analysis of human liver phosphoproteome.</title>
        <authorList>
            <person name="Bian Y."/>
            <person name="Song C."/>
            <person name="Cheng K."/>
            <person name="Dong M."/>
            <person name="Wang F."/>
            <person name="Huang J."/>
            <person name="Sun D."/>
            <person name="Wang L."/>
            <person name="Ye M."/>
            <person name="Zou H."/>
        </authorList>
    </citation>
    <scope>PHOSPHORYLATION [LARGE SCALE ANALYSIS] AT SER-20; SER-110 AND SER-161</scope>
    <scope>IDENTIFICATION BY MASS SPECTROMETRY [LARGE SCALE ANALYSIS]</scope>
    <source>
        <tissue>Liver</tissue>
    </source>
</reference>
<reference key="20">
    <citation type="journal article" date="2015" name="Proteomics">
        <title>N-terminome analysis of the human mitochondrial proteome.</title>
        <authorList>
            <person name="Vaca Jacome A.S."/>
            <person name="Rabilloud T."/>
            <person name="Schaeffer-Reiss C."/>
            <person name="Rompais M."/>
            <person name="Ayoub D."/>
            <person name="Lane L."/>
            <person name="Bairoch A."/>
            <person name="Van Dorsselaer A."/>
            <person name="Carapito C."/>
        </authorList>
    </citation>
    <scope>ACETYLATION [LARGE SCALE ANALYSIS] AT MET-1</scope>
    <scope>IDENTIFICATION BY MASS SPECTROMETRY [LARGE SCALE ANALYSIS]</scope>
</reference>
<reference key="21">
    <citation type="journal article" date="2017" name="J. Biol. Chem.">
        <title>Peptide array based screening reveals a large number of proteins interacting with the ankyrin repeat domain of the zDHHC17 S-acyltransferase.</title>
        <authorList>
            <person name="Lemonidis K."/>
            <person name="MacLeod R."/>
            <person name="Baillie G.S."/>
            <person name="Chamberlain L.H."/>
        </authorList>
    </citation>
    <scope>INTERACTION WITH ZDHHC17</scope>
</reference>
<reference key="22">
    <citation type="journal article" date="2003" name="J. Biol. Chem.">
        <title>Homotetrameric structure of the SNAP-23 N-terminal coiled-coil domain.</title>
        <authorList>
            <person name="Freedman S.J."/>
            <person name="Song H.K."/>
            <person name="Xu Y."/>
            <person name="Sun Z.Y."/>
            <person name="Eck M.J."/>
        </authorList>
    </citation>
    <scope>X-RAY CRYSTALLOGRAPHY (2.3 ANGSTROMS) OF 23-76</scope>
    <scope>COILED-COIL DOMAIN</scope>
    <scope>SUBUNIT</scope>
</reference>
<accession>O00161</accession>
<accession>O00162</accession>
<accession>Q13602</accession>
<accession>Q6IAE3</accession>
<dbReference type="EMBL" id="U55936">
    <property type="protein sequence ID" value="AAC50537.1"/>
    <property type="molecule type" value="mRNA"/>
</dbReference>
<dbReference type="EMBL" id="Y09567">
    <property type="protein sequence ID" value="CAA70760.1"/>
    <property type="molecule type" value="mRNA"/>
</dbReference>
<dbReference type="EMBL" id="Y09568">
    <property type="protein sequence ID" value="CAA70761.1"/>
    <property type="molecule type" value="mRNA"/>
</dbReference>
<dbReference type="EMBL" id="AJ011915">
    <property type="protein sequence ID" value="CAA09864.1"/>
    <property type="molecule type" value="mRNA"/>
</dbReference>
<dbReference type="EMBL" id="AJ278972">
    <property type="protein sequence ID" value="CAC07504.1"/>
    <property type="molecule type" value="Genomic_DNA"/>
</dbReference>
<dbReference type="EMBL" id="AJ278973">
    <property type="protein sequence ID" value="CAC07504.1"/>
    <property type="status" value="JOINED"/>
    <property type="molecule type" value="Genomic_DNA"/>
</dbReference>
<dbReference type="EMBL" id="AJ278974">
    <property type="protein sequence ID" value="CAC07504.1"/>
    <property type="status" value="JOINED"/>
    <property type="molecule type" value="Genomic_DNA"/>
</dbReference>
<dbReference type="EMBL" id="BT006916">
    <property type="protein sequence ID" value="AAP35562.1"/>
    <property type="molecule type" value="mRNA"/>
</dbReference>
<dbReference type="EMBL" id="CR457212">
    <property type="protein sequence ID" value="CAG33493.1"/>
    <property type="molecule type" value="mRNA"/>
</dbReference>
<dbReference type="EMBL" id="BC000148">
    <property type="protein sequence ID" value="AAH00148.1"/>
    <property type="molecule type" value="mRNA"/>
</dbReference>
<dbReference type="EMBL" id="BC003686">
    <property type="protein sequence ID" value="AAH03686.1"/>
    <property type="molecule type" value="mRNA"/>
</dbReference>
<dbReference type="EMBL" id="BC022890">
    <property type="protein sequence ID" value="AAH22890.1"/>
    <property type="molecule type" value="mRNA"/>
</dbReference>
<dbReference type="CCDS" id="CCDS10087.1">
    <molecule id="O00161-1"/>
</dbReference>
<dbReference type="CCDS" id="CCDS10088.1">
    <molecule id="O00161-2"/>
</dbReference>
<dbReference type="PIR" id="JC5296">
    <property type="entry name" value="JC5296"/>
</dbReference>
<dbReference type="PIR" id="JC5297">
    <property type="entry name" value="JC5297"/>
</dbReference>
<dbReference type="RefSeq" id="NP_003816.2">
    <molecule id="O00161-1"/>
    <property type="nucleotide sequence ID" value="NM_003825.3"/>
</dbReference>
<dbReference type="RefSeq" id="NP_570710.1">
    <molecule id="O00161-2"/>
    <property type="nucleotide sequence ID" value="NM_130798.3"/>
</dbReference>
<dbReference type="RefSeq" id="XP_016878183.2">
    <molecule id="O00161-1"/>
    <property type="nucleotide sequence ID" value="XM_017022694.2"/>
</dbReference>
<dbReference type="RefSeq" id="XP_047289158.1">
    <molecule id="O00161-1"/>
    <property type="nucleotide sequence ID" value="XM_047433202.1"/>
</dbReference>
<dbReference type="RefSeq" id="XP_047289159.1">
    <molecule id="O00161-1"/>
    <property type="nucleotide sequence ID" value="XM_047433203.1"/>
</dbReference>
<dbReference type="RefSeq" id="XP_054235016.1">
    <molecule id="O00161-1"/>
    <property type="nucleotide sequence ID" value="XM_054379041.1"/>
</dbReference>
<dbReference type="RefSeq" id="XP_054235017.1">
    <molecule id="O00161-1"/>
    <property type="nucleotide sequence ID" value="XM_054379042.1"/>
</dbReference>
<dbReference type="RefSeq" id="XP_054235018.1">
    <molecule id="O00161-1"/>
    <property type="nucleotide sequence ID" value="XM_054379043.1"/>
</dbReference>
<dbReference type="PDB" id="1NHL">
    <property type="method" value="X-ray"/>
    <property type="resolution" value="2.30 A"/>
    <property type="chains" value="A=23-76"/>
</dbReference>
<dbReference type="PDB" id="3ZUS">
    <property type="method" value="X-ray"/>
    <property type="resolution" value="2.95 A"/>
    <property type="chains" value="A/B/C/D=150-211"/>
</dbReference>
<dbReference type="PDBsum" id="1NHL"/>
<dbReference type="PDBsum" id="3ZUS"/>
<dbReference type="SMR" id="O00161"/>
<dbReference type="BioGRID" id="114303">
    <property type="interactions" value="209"/>
</dbReference>
<dbReference type="CORUM" id="O00161"/>
<dbReference type="FunCoup" id="O00161">
    <property type="interactions" value="1218"/>
</dbReference>
<dbReference type="IntAct" id="O00161">
    <property type="interactions" value="66"/>
</dbReference>
<dbReference type="MINT" id="O00161"/>
<dbReference type="STRING" id="9606.ENSP00000249647"/>
<dbReference type="TCDB" id="1.F.1.1.1">
    <property type="family name" value="the synaptosomal vesicle fusion pore (svf-pore) family"/>
</dbReference>
<dbReference type="GlyGen" id="O00161">
    <property type="glycosylation" value="2 sites, 1 N-linked glycan (1 site), 1 O-linked glycan (1 site)"/>
</dbReference>
<dbReference type="iPTMnet" id="O00161"/>
<dbReference type="MetOSite" id="O00161"/>
<dbReference type="PhosphoSitePlus" id="O00161"/>
<dbReference type="SwissPalm" id="O00161"/>
<dbReference type="BioMuta" id="SNAP23"/>
<dbReference type="OGP" id="O00161"/>
<dbReference type="jPOST" id="O00161"/>
<dbReference type="MassIVE" id="O00161"/>
<dbReference type="PaxDb" id="9606-ENSP00000249647"/>
<dbReference type="PeptideAtlas" id="O00161"/>
<dbReference type="ProteomicsDB" id="47748">
    <molecule id="O00161-1"/>
</dbReference>
<dbReference type="ProteomicsDB" id="47749">
    <molecule id="O00161-2"/>
</dbReference>
<dbReference type="Pumba" id="O00161"/>
<dbReference type="Antibodypedia" id="712">
    <property type="antibodies" value="427 antibodies from 35 providers"/>
</dbReference>
<dbReference type="DNASU" id="8773"/>
<dbReference type="Ensembl" id="ENST00000249647.8">
    <molecule id="O00161-1"/>
    <property type="protein sequence ID" value="ENSP00000249647.3"/>
    <property type="gene ID" value="ENSG00000092531.10"/>
</dbReference>
<dbReference type="Ensembl" id="ENST00000349777.5">
    <molecule id="O00161-2"/>
    <property type="protein sequence ID" value="ENSP00000207062.1"/>
    <property type="gene ID" value="ENSG00000092531.10"/>
</dbReference>
<dbReference type="Ensembl" id="ENST00000397138.5">
    <molecule id="O00161-2"/>
    <property type="protein sequence ID" value="ENSP00000380327.1"/>
    <property type="gene ID" value="ENSG00000092531.10"/>
</dbReference>
<dbReference type="GeneID" id="8773"/>
<dbReference type="KEGG" id="hsa:8773"/>
<dbReference type="MANE-Select" id="ENST00000249647.8">
    <property type="protein sequence ID" value="ENSP00000249647.3"/>
    <property type="RefSeq nucleotide sequence ID" value="NM_003825.4"/>
    <property type="RefSeq protein sequence ID" value="NP_003816.2"/>
</dbReference>
<dbReference type="UCSC" id="uc001zpz.3">
    <molecule id="O00161-1"/>
    <property type="organism name" value="human"/>
</dbReference>
<dbReference type="AGR" id="HGNC:11131"/>
<dbReference type="CTD" id="8773"/>
<dbReference type="DisGeNET" id="8773"/>
<dbReference type="GeneCards" id="SNAP23"/>
<dbReference type="HGNC" id="HGNC:11131">
    <property type="gene designation" value="SNAP23"/>
</dbReference>
<dbReference type="HPA" id="ENSG00000092531">
    <property type="expression patterns" value="Low tissue specificity"/>
</dbReference>
<dbReference type="MIM" id="602534">
    <property type="type" value="gene"/>
</dbReference>
<dbReference type="neXtProt" id="NX_O00161"/>
<dbReference type="OpenTargets" id="ENSG00000092531"/>
<dbReference type="PharmGKB" id="PA35979"/>
<dbReference type="VEuPathDB" id="HostDB:ENSG00000092531"/>
<dbReference type="eggNOG" id="KOG3065">
    <property type="taxonomic scope" value="Eukaryota"/>
</dbReference>
<dbReference type="GeneTree" id="ENSGT00950000182843"/>
<dbReference type="HOGENOM" id="CLU_096939_0_0_1"/>
<dbReference type="InParanoid" id="O00161"/>
<dbReference type="OMA" id="MNTEIER"/>
<dbReference type="OrthoDB" id="19261at2759"/>
<dbReference type="PAN-GO" id="O00161">
    <property type="GO annotations" value="7 GO annotations based on evolutionary models"/>
</dbReference>
<dbReference type="PhylomeDB" id="O00161"/>
<dbReference type="TreeFam" id="TF315125"/>
<dbReference type="PathwayCommons" id="O00161"/>
<dbReference type="Reactome" id="R-HSA-1236974">
    <property type="pathway name" value="ER-Phagosome pathway"/>
</dbReference>
<dbReference type="Reactome" id="R-HSA-1445148">
    <property type="pathway name" value="Translocation of SLC2A4 (GLUT4) to the plasma membrane"/>
</dbReference>
<dbReference type="Reactome" id="R-HSA-199992">
    <property type="pathway name" value="trans-Golgi Network Vesicle Budding"/>
</dbReference>
<dbReference type="Reactome" id="R-HSA-6798695">
    <property type="pathway name" value="Neutrophil degranulation"/>
</dbReference>
<dbReference type="Reactome" id="R-HSA-8980692">
    <property type="pathway name" value="RHOA GTPase cycle"/>
</dbReference>
<dbReference type="Reactome" id="R-HSA-9013026">
    <property type="pathway name" value="RHOB GTPase cycle"/>
</dbReference>
<dbReference type="Reactome" id="R-HSA-9013148">
    <property type="pathway name" value="CDC42 GTPase cycle"/>
</dbReference>
<dbReference type="Reactome" id="R-HSA-9013149">
    <property type="pathway name" value="RAC1 GTPase cycle"/>
</dbReference>
<dbReference type="Reactome" id="R-HSA-9013406">
    <property type="pathway name" value="RHOQ GTPase cycle"/>
</dbReference>
<dbReference type="Reactome" id="R-HSA-9013409">
    <property type="pathway name" value="RHOJ GTPase cycle"/>
</dbReference>
<dbReference type="Reactome" id="R-HSA-9013423">
    <property type="pathway name" value="RAC3 GTPase cycle"/>
</dbReference>
<dbReference type="Reactome" id="R-HSA-9035034">
    <property type="pathway name" value="RHOF GTPase cycle"/>
</dbReference>
<dbReference type="SignaLink" id="O00161"/>
<dbReference type="SIGNOR" id="O00161"/>
<dbReference type="BioGRID-ORCS" id="8773">
    <property type="hits" value="439 hits in 1169 CRISPR screens"/>
</dbReference>
<dbReference type="ChiTaRS" id="SNAP23">
    <property type="organism name" value="human"/>
</dbReference>
<dbReference type="EvolutionaryTrace" id="O00161"/>
<dbReference type="GeneWiki" id="SNAP23"/>
<dbReference type="GenomeRNAi" id="8773"/>
<dbReference type="Pharos" id="O00161">
    <property type="development level" value="Tbio"/>
</dbReference>
<dbReference type="PRO" id="PR:O00161"/>
<dbReference type="Proteomes" id="UP000005640">
    <property type="component" value="Chromosome 15"/>
</dbReference>
<dbReference type="RNAct" id="O00161">
    <property type="molecule type" value="protein"/>
</dbReference>
<dbReference type="Bgee" id="ENSG00000092531">
    <property type="expression patterns" value="Expressed in monocyte and 205 other cell types or tissues"/>
</dbReference>
<dbReference type="ExpressionAtlas" id="O00161">
    <property type="expression patterns" value="baseline and differential"/>
</dbReference>
<dbReference type="GO" id="GO:0005912">
    <property type="term" value="C:adherens junction"/>
    <property type="evidence" value="ECO:0000314"/>
    <property type="project" value="BHF-UCL"/>
</dbReference>
<dbReference type="GO" id="GO:0042582">
    <property type="term" value="C:azurophil granule"/>
    <property type="evidence" value="ECO:0000314"/>
    <property type="project" value="UniProtKB"/>
</dbReference>
<dbReference type="GO" id="GO:0005929">
    <property type="term" value="C:cilium"/>
    <property type="evidence" value="ECO:0000314"/>
    <property type="project" value="HPA"/>
</dbReference>
<dbReference type="GO" id="GO:0005737">
    <property type="term" value="C:cytoplasm"/>
    <property type="evidence" value="ECO:0000314"/>
    <property type="project" value="UniProtKB"/>
</dbReference>
<dbReference type="GO" id="GO:0070062">
    <property type="term" value="C:extracellular exosome"/>
    <property type="evidence" value="ECO:0007005"/>
    <property type="project" value="UniProtKB"/>
</dbReference>
<dbReference type="GO" id="GO:0005925">
    <property type="term" value="C:focal adhesion"/>
    <property type="evidence" value="ECO:0007005"/>
    <property type="project" value="UniProtKB"/>
</dbReference>
<dbReference type="GO" id="GO:0005739">
    <property type="term" value="C:mitochondrion"/>
    <property type="evidence" value="ECO:0000314"/>
    <property type="project" value="CACAO"/>
</dbReference>
<dbReference type="GO" id="GO:0043005">
    <property type="term" value="C:neuron projection"/>
    <property type="evidence" value="ECO:0007669"/>
    <property type="project" value="UniProtKB-KW"/>
</dbReference>
<dbReference type="GO" id="GO:0005654">
    <property type="term" value="C:nucleoplasm"/>
    <property type="evidence" value="ECO:0000314"/>
    <property type="project" value="HPA"/>
</dbReference>
<dbReference type="GO" id="GO:0030670">
    <property type="term" value="C:phagocytic vesicle membrane"/>
    <property type="evidence" value="ECO:0000304"/>
    <property type="project" value="Reactome"/>
</dbReference>
<dbReference type="GO" id="GO:0005886">
    <property type="term" value="C:plasma membrane"/>
    <property type="evidence" value="ECO:0000314"/>
    <property type="project" value="HPA"/>
</dbReference>
<dbReference type="GO" id="GO:0098793">
    <property type="term" value="C:presynapse"/>
    <property type="evidence" value="ECO:0007669"/>
    <property type="project" value="GOC"/>
</dbReference>
<dbReference type="GO" id="GO:0031201">
    <property type="term" value="C:SNARE complex"/>
    <property type="evidence" value="ECO:0000314"/>
    <property type="project" value="UniProtKB"/>
</dbReference>
<dbReference type="GO" id="GO:0042581">
    <property type="term" value="C:specific granule"/>
    <property type="evidence" value="ECO:0000314"/>
    <property type="project" value="UniProtKB"/>
</dbReference>
<dbReference type="GO" id="GO:0035579">
    <property type="term" value="C:specific granule membrane"/>
    <property type="evidence" value="ECO:0000304"/>
    <property type="project" value="Reactome"/>
</dbReference>
<dbReference type="GO" id="GO:0070821">
    <property type="term" value="C:tertiary granule membrane"/>
    <property type="evidence" value="ECO:0000304"/>
    <property type="project" value="Reactome"/>
</dbReference>
<dbReference type="GO" id="GO:0005484">
    <property type="term" value="F:SNAP receptor activity"/>
    <property type="evidence" value="ECO:0000318"/>
    <property type="project" value="GO_Central"/>
</dbReference>
<dbReference type="GO" id="GO:0019905">
    <property type="term" value="F:syntaxin binding"/>
    <property type="evidence" value="ECO:0000353"/>
    <property type="project" value="UniProtKB"/>
</dbReference>
<dbReference type="GO" id="GO:0006887">
    <property type="term" value="P:exocytosis"/>
    <property type="evidence" value="ECO:0000318"/>
    <property type="project" value="GO_Central"/>
</dbReference>
<dbReference type="GO" id="GO:0002553">
    <property type="term" value="P:histamine secretion by mast cell"/>
    <property type="evidence" value="ECO:0000315"/>
    <property type="project" value="UniProtKB"/>
</dbReference>
<dbReference type="GO" id="GO:0061025">
    <property type="term" value="P:membrane fusion"/>
    <property type="evidence" value="ECO:0000304"/>
    <property type="project" value="ProtInc"/>
</dbReference>
<dbReference type="GO" id="GO:0006892">
    <property type="term" value="P:post-Golgi vesicle-mediated transport"/>
    <property type="evidence" value="ECO:0000304"/>
    <property type="project" value="ProtInc"/>
</dbReference>
<dbReference type="GO" id="GO:0015031">
    <property type="term" value="P:protein transport"/>
    <property type="evidence" value="ECO:0007669"/>
    <property type="project" value="UniProtKB-KW"/>
</dbReference>
<dbReference type="GO" id="GO:0031629">
    <property type="term" value="P:synaptic vesicle fusion to presynaptic active zone membrane"/>
    <property type="evidence" value="ECO:0000318"/>
    <property type="project" value="GO_Central"/>
</dbReference>
<dbReference type="GO" id="GO:0016082">
    <property type="term" value="P:synaptic vesicle priming"/>
    <property type="evidence" value="ECO:0000318"/>
    <property type="project" value="GO_Central"/>
</dbReference>
<dbReference type="GO" id="GO:0006903">
    <property type="term" value="P:vesicle targeting"/>
    <property type="evidence" value="ECO:0000304"/>
    <property type="project" value="ProtInc"/>
</dbReference>
<dbReference type="CDD" id="cd15884">
    <property type="entry name" value="SNARE_SNAP23C"/>
    <property type="match status" value="1"/>
</dbReference>
<dbReference type="CDD" id="cd15895">
    <property type="entry name" value="SNARE_SNAP23N"/>
    <property type="match status" value="1"/>
</dbReference>
<dbReference type="FunFam" id="1.20.5.110:FF:000007">
    <property type="entry name" value="Synaptosomal-associated protein"/>
    <property type="match status" value="1"/>
</dbReference>
<dbReference type="FunFam" id="1.20.5.110:FF:000018">
    <property type="entry name" value="Synaptosomal-associated protein"/>
    <property type="match status" value="1"/>
</dbReference>
<dbReference type="Gene3D" id="1.20.5.110">
    <property type="match status" value="2"/>
</dbReference>
<dbReference type="InterPro" id="IPR000928">
    <property type="entry name" value="SNAP-25_dom"/>
</dbReference>
<dbReference type="InterPro" id="IPR000727">
    <property type="entry name" value="T_SNARE_dom"/>
</dbReference>
<dbReference type="PANTHER" id="PTHR19305">
    <property type="entry name" value="SYNAPTOSOMAL ASSOCIATED PROTEIN"/>
    <property type="match status" value="1"/>
</dbReference>
<dbReference type="PANTHER" id="PTHR19305:SF4">
    <property type="entry name" value="SYNAPTOSOMAL-ASSOCIATED PROTEIN 23"/>
    <property type="match status" value="1"/>
</dbReference>
<dbReference type="Pfam" id="PF00835">
    <property type="entry name" value="SNAP-25"/>
    <property type="match status" value="1"/>
</dbReference>
<dbReference type="SMART" id="SM00397">
    <property type="entry name" value="t_SNARE"/>
    <property type="match status" value="2"/>
</dbReference>
<dbReference type="SUPFAM" id="SSF58038">
    <property type="entry name" value="SNARE fusion complex"/>
    <property type="match status" value="2"/>
</dbReference>
<dbReference type="PROSITE" id="PS50192">
    <property type="entry name" value="T_SNARE"/>
    <property type="match status" value="2"/>
</dbReference>
<sequence length="211" mass="23354">MDNLSSEEIQQRAHQITDESLESTRRILGLAIESQDAGIKTITMLDEQKEQLNRIEEGLDQINKDMRETEKTLTELNKCCGLCVCPCNRTKNFESGKAYKTTWGDGGENSPCNVVSKQPGPVTNGQLQQPTTGAASGGYIKRITNDAREDEMEENLTQVGSILGNLKDMALNIGNEIDAQNPQIKRITDKADTNRDRIDIANARAKKLIDS</sequence>
<keyword id="KW-0002">3D-structure</keyword>
<keyword id="KW-0007">Acetylation</keyword>
<keyword id="KW-0025">Alternative splicing</keyword>
<keyword id="KW-1003">Cell membrane</keyword>
<keyword id="KW-0175">Coiled coil</keyword>
<keyword id="KW-0903">Direct protein sequencing</keyword>
<keyword id="KW-0449">Lipoprotein</keyword>
<keyword id="KW-0472">Membrane</keyword>
<keyword id="KW-0564">Palmitate</keyword>
<keyword id="KW-0597">Phosphoprotein</keyword>
<keyword id="KW-0653">Protein transport</keyword>
<keyword id="KW-1267">Proteomics identification</keyword>
<keyword id="KW-1185">Reference proteome</keyword>
<keyword id="KW-0677">Repeat</keyword>
<keyword id="KW-0770">Synapse</keyword>
<keyword id="KW-0771">Synaptosome</keyword>
<keyword id="KW-0813">Transport</keyword>
<proteinExistence type="evidence at protein level"/>
<name>SNP23_HUMAN</name>
<evidence type="ECO:0000250" key="1">
    <source>
        <dbReference type="UniProtKB" id="O09044"/>
    </source>
</evidence>
<evidence type="ECO:0000250" key="2">
    <source>
        <dbReference type="UniProtKB" id="O70377"/>
    </source>
</evidence>
<evidence type="ECO:0000255" key="3">
    <source>
        <dbReference type="PROSITE-ProRule" id="PRU00202"/>
    </source>
</evidence>
<evidence type="ECO:0000269" key="4">
    <source>
    </source>
</evidence>
<evidence type="ECO:0000269" key="5">
    <source>
    </source>
</evidence>
<evidence type="ECO:0000269" key="6">
    <source>
    </source>
</evidence>
<evidence type="ECO:0000269" key="7">
    <source>
    </source>
</evidence>
<evidence type="ECO:0000269" key="8">
    <source>
    </source>
</evidence>
<evidence type="ECO:0000269" key="9">
    <source ref="8"/>
</evidence>
<evidence type="ECO:0000303" key="10">
    <source>
    </source>
</evidence>
<evidence type="ECO:0000305" key="11"/>
<evidence type="ECO:0007744" key="12">
    <source>
    </source>
</evidence>
<evidence type="ECO:0007744" key="13">
    <source>
    </source>
</evidence>
<evidence type="ECO:0007744" key="14">
    <source>
    </source>
</evidence>
<evidence type="ECO:0007744" key="15">
    <source>
    </source>
</evidence>
<evidence type="ECO:0007744" key="16">
    <source>
    </source>
</evidence>
<evidence type="ECO:0007744" key="17">
    <source>
    </source>
</evidence>
<evidence type="ECO:0007744" key="18">
    <source>
    </source>
</evidence>
<evidence type="ECO:0007744" key="19">
    <source>
    </source>
</evidence>
<evidence type="ECO:0007744" key="20">
    <source>
    </source>
</evidence>
<evidence type="ECO:0007829" key="21">
    <source>
        <dbReference type="PDB" id="1NHL"/>
    </source>
</evidence>
<feature type="chain" id="PRO_0000213598" description="Synaptosomal-associated protein 23">
    <location>
        <begin position="1"/>
        <end position="211"/>
    </location>
</feature>
<feature type="domain" description="t-SNARE coiled-coil homology 1" evidence="3">
    <location>
        <begin position="14"/>
        <end position="76"/>
    </location>
</feature>
<feature type="domain" description="t-SNARE coiled-coil homology 2" evidence="3">
    <location>
        <begin position="146"/>
        <end position="208"/>
    </location>
</feature>
<feature type="coiled-coil region" evidence="5">
    <location>
        <begin position="23"/>
        <end position="76"/>
    </location>
</feature>
<feature type="modified residue" description="N-acetylmethionine" evidence="6 9 13 14 15 16 17 20">
    <location>
        <position position="1"/>
    </location>
</feature>
<feature type="modified residue" description="Phosphoserine" evidence="18">
    <location>
        <position position="5"/>
    </location>
</feature>
<feature type="modified residue" description="Phosphoserine" evidence="18">
    <location>
        <position position="6"/>
    </location>
</feature>
<feature type="modified residue" description="Phosphoserine" evidence="18 19">
    <location>
        <position position="20"/>
    </location>
</feature>
<feature type="modified residue" description="Phosphoserine" evidence="1">
    <location>
        <position position="23"/>
    </location>
</feature>
<feature type="modified residue" description="Phosphoserine" evidence="15 18">
    <location>
        <position position="34"/>
    </location>
</feature>
<feature type="modified residue" description="Phosphoserine" evidence="12 14 15 18 19">
    <location>
        <position position="110"/>
    </location>
</feature>
<feature type="modified residue" description="Phosphoserine" evidence="19">
    <location>
        <position position="161"/>
    </location>
</feature>
<feature type="lipid moiety-binding region" description="S-palmitoyl cysteine" evidence="7">
    <location>
        <position position="79"/>
    </location>
</feature>
<feature type="lipid moiety-binding region" description="S-palmitoyl cysteine" evidence="7">
    <location>
        <position position="80"/>
    </location>
</feature>
<feature type="lipid moiety-binding region" description="S-palmitoyl cysteine" evidence="7">
    <location>
        <position position="83"/>
    </location>
</feature>
<feature type="lipid moiety-binding region" description="S-palmitoyl cysteine" evidence="7">
    <location>
        <position position="85"/>
    </location>
</feature>
<feature type="lipid moiety-binding region" description="S-palmitoyl cysteine" evidence="7">
    <location>
        <position position="87"/>
    </location>
</feature>
<feature type="lipid moiety-binding region" description="S-palmitoyl cysteine" evidence="7">
    <location>
        <position position="112"/>
    </location>
</feature>
<feature type="splice variant" id="VSP_006187" description="In isoform SNAP-23b." evidence="10">
    <original>R</original>
    <variation>S</variation>
    <location>
        <position position="89"/>
    </location>
</feature>
<feature type="splice variant" id="VSP_006188" description="In isoform SNAP-23b." evidence="10">
    <location>
        <begin position="90"/>
        <end position="142"/>
    </location>
</feature>
<feature type="sequence conflict" description="In Ref. 1; AAC50537." evidence="11" ref="1">
    <original>A</original>
    <variation>V</variation>
    <location>
        <position position="135"/>
    </location>
</feature>
<feature type="helix" evidence="21">
    <location>
        <begin position="24"/>
        <end position="74"/>
    </location>
</feature>
<gene>
    <name type="primary">SNAP23</name>
</gene>